<comment type="function">
    <text evidence="1">Methyltransferase required for the conversion of demethylmenaquinol (DMKH2) to menaquinol (MKH2).</text>
</comment>
<comment type="catalytic activity">
    <reaction evidence="1">
        <text>a 2-demethylmenaquinol + S-adenosyl-L-methionine = a menaquinol + S-adenosyl-L-homocysteine + H(+)</text>
        <dbReference type="Rhea" id="RHEA:42640"/>
        <dbReference type="Rhea" id="RHEA-COMP:9539"/>
        <dbReference type="Rhea" id="RHEA-COMP:9563"/>
        <dbReference type="ChEBI" id="CHEBI:15378"/>
        <dbReference type="ChEBI" id="CHEBI:18151"/>
        <dbReference type="ChEBI" id="CHEBI:55437"/>
        <dbReference type="ChEBI" id="CHEBI:57856"/>
        <dbReference type="ChEBI" id="CHEBI:59789"/>
        <dbReference type="EC" id="2.1.1.163"/>
    </reaction>
</comment>
<comment type="pathway">
    <text evidence="1">Quinol/quinone metabolism; menaquinone biosynthesis; menaquinol from 1,4-dihydroxy-2-naphthoate: step 2/2.</text>
</comment>
<comment type="similarity">
    <text evidence="1">Belongs to the class I-like SAM-binding methyltransferase superfamily. MenG/UbiE family.</text>
</comment>
<reference key="1">
    <citation type="journal article" date="1999" name="Science">
        <title>Genome sequence of the radioresistant bacterium Deinococcus radiodurans R1.</title>
        <authorList>
            <person name="White O."/>
            <person name="Eisen J.A."/>
            <person name="Heidelberg J.F."/>
            <person name="Hickey E.K."/>
            <person name="Peterson J.D."/>
            <person name="Dodson R.J."/>
            <person name="Haft D.H."/>
            <person name="Gwinn M.L."/>
            <person name="Nelson W.C."/>
            <person name="Richardson D.L."/>
            <person name="Moffat K.S."/>
            <person name="Qin H."/>
            <person name="Jiang L."/>
            <person name="Pamphile W."/>
            <person name="Crosby M."/>
            <person name="Shen M."/>
            <person name="Vamathevan J.J."/>
            <person name="Lam P."/>
            <person name="McDonald L.A."/>
            <person name="Utterback T.R."/>
            <person name="Zalewski C."/>
            <person name="Makarova K.S."/>
            <person name="Aravind L."/>
            <person name="Daly M.J."/>
            <person name="Minton K.W."/>
            <person name="Fleischmann R.D."/>
            <person name="Ketchum K.A."/>
            <person name="Nelson K.E."/>
            <person name="Salzberg S.L."/>
            <person name="Smith H.O."/>
            <person name="Venter J.C."/>
            <person name="Fraser C.M."/>
        </authorList>
    </citation>
    <scope>NUCLEOTIDE SEQUENCE [LARGE SCALE GENOMIC DNA]</scope>
    <source>
        <strain>ATCC 13939 / DSM 20539 / JCM 16871 / CCUG 27074 / LMG 4051 / NBRC 15346 / NCIMB 9279 / VKM B-1422 / R1</strain>
    </source>
</reference>
<name>MENG_DEIRA</name>
<protein>
    <recommendedName>
        <fullName evidence="1">Demethylmenaquinone methyltransferase</fullName>
        <ecNumber evidence="1">2.1.1.163</ecNumber>
    </recommendedName>
</protein>
<dbReference type="EC" id="2.1.1.163" evidence="1"/>
<dbReference type="EMBL" id="AE000513">
    <property type="protein sequence ID" value="AAF11949.1"/>
    <property type="molecule type" value="Genomic_DNA"/>
</dbReference>
<dbReference type="PIR" id="F75277">
    <property type="entry name" value="F75277"/>
</dbReference>
<dbReference type="RefSeq" id="NP_296126.1">
    <property type="nucleotide sequence ID" value="NC_001263.1"/>
</dbReference>
<dbReference type="RefSeq" id="WP_010889031.1">
    <property type="nucleotide sequence ID" value="NC_001263.1"/>
</dbReference>
<dbReference type="SMR" id="Q9RRT0"/>
<dbReference type="FunCoup" id="Q9RRT0">
    <property type="interactions" value="484"/>
</dbReference>
<dbReference type="STRING" id="243230.DR_2405"/>
<dbReference type="PaxDb" id="243230-DR_2405"/>
<dbReference type="EnsemblBacteria" id="AAF11949">
    <property type="protein sequence ID" value="AAF11949"/>
    <property type="gene ID" value="DR_2405"/>
</dbReference>
<dbReference type="GeneID" id="69518658"/>
<dbReference type="KEGG" id="dra:DR_2405"/>
<dbReference type="PATRIC" id="fig|243230.17.peg.2641"/>
<dbReference type="eggNOG" id="COG2226">
    <property type="taxonomic scope" value="Bacteria"/>
</dbReference>
<dbReference type="HOGENOM" id="CLU_037990_0_0_0"/>
<dbReference type="InParanoid" id="Q9RRT0"/>
<dbReference type="OrthoDB" id="9808140at2"/>
<dbReference type="UniPathway" id="UPA00079">
    <property type="reaction ID" value="UER00169"/>
</dbReference>
<dbReference type="Proteomes" id="UP000002524">
    <property type="component" value="Chromosome 1"/>
</dbReference>
<dbReference type="GO" id="GO:0043770">
    <property type="term" value="F:demethylmenaquinone methyltransferase activity"/>
    <property type="evidence" value="ECO:0007669"/>
    <property type="project" value="UniProtKB-UniRule"/>
</dbReference>
<dbReference type="GO" id="GO:0008168">
    <property type="term" value="F:methyltransferase activity"/>
    <property type="evidence" value="ECO:0000318"/>
    <property type="project" value="GO_Central"/>
</dbReference>
<dbReference type="GO" id="GO:0009234">
    <property type="term" value="P:menaquinone biosynthetic process"/>
    <property type="evidence" value="ECO:0007669"/>
    <property type="project" value="UniProtKB-UniRule"/>
</dbReference>
<dbReference type="GO" id="GO:0032259">
    <property type="term" value="P:methylation"/>
    <property type="evidence" value="ECO:0007669"/>
    <property type="project" value="UniProtKB-KW"/>
</dbReference>
<dbReference type="CDD" id="cd02440">
    <property type="entry name" value="AdoMet_MTases"/>
    <property type="match status" value="1"/>
</dbReference>
<dbReference type="Gene3D" id="3.40.50.150">
    <property type="entry name" value="Vaccinia Virus protein VP39"/>
    <property type="match status" value="1"/>
</dbReference>
<dbReference type="HAMAP" id="MF_01813">
    <property type="entry name" value="MenG_UbiE_methyltr"/>
    <property type="match status" value="1"/>
</dbReference>
<dbReference type="InterPro" id="IPR029063">
    <property type="entry name" value="SAM-dependent_MTases_sf"/>
</dbReference>
<dbReference type="InterPro" id="IPR004033">
    <property type="entry name" value="UbiE/COQ5_MeTrFase"/>
</dbReference>
<dbReference type="InterPro" id="IPR023576">
    <property type="entry name" value="UbiE/COQ5_MeTrFase_CS"/>
</dbReference>
<dbReference type="NCBIfam" id="TIGR01934">
    <property type="entry name" value="MenG_MenH_UbiE"/>
    <property type="match status" value="1"/>
</dbReference>
<dbReference type="NCBIfam" id="NF001244">
    <property type="entry name" value="PRK00216.1-5"/>
    <property type="match status" value="1"/>
</dbReference>
<dbReference type="PANTHER" id="PTHR43591:SF24">
    <property type="entry name" value="2-METHOXY-6-POLYPRENYL-1,4-BENZOQUINOL METHYLASE, MITOCHONDRIAL"/>
    <property type="match status" value="1"/>
</dbReference>
<dbReference type="PANTHER" id="PTHR43591">
    <property type="entry name" value="METHYLTRANSFERASE"/>
    <property type="match status" value="1"/>
</dbReference>
<dbReference type="Pfam" id="PF01209">
    <property type="entry name" value="Ubie_methyltran"/>
    <property type="match status" value="1"/>
</dbReference>
<dbReference type="SUPFAM" id="SSF53335">
    <property type="entry name" value="S-adenosyl-L-methionine-dependent methyltransferases"/>
    <property type="match status" value="1"/>
</dbReference>
<dbReference type="PROSITE" id="PS51608">
    <property type="entry name" value="SAM_MT_UBIE"/>
    <property type="match status" value="1"/>
</dbReference>
<dbReference type="PROSITE" id="PS01183">
    <property type="entry name" value="UBIE_1"/>
    <property type="match status" value="1"/>
</dbReference>
<evidence type="ECO:0000255" key="1">
    <source>
        <dbReference type="HAMAP-Rule" id="MF_01813"/>
    </source>
</evidence>
<gene>
    <name evidence="1" type="primary">menG</name>
    <name type="ordered locus">DR_2405</name>
</gene>
<feature type="chain" id="PRO_0000193272" description="Demethylmenaquinone methyltransferase">
    <location>
        <begin position="1"/>
        <end position="241"/>
    </location>
</feature>
<feature type="binding site" evidence="1">
    <location>
        <position position="68"/>
    </location>
    <ligand>
        <name>S-adenosyl-L-methionine</name>
        <dbReference type="ChEBI" id="CHEBI:59789"/>
    </ligand>
</feature>
<feature type="binding site" evidence="1">
    <location>
        <position position="88"/>
    </location>
    <ligand>
        <name>S-adenosyl-L-methionine</name>
        <dbReference type="ChEBI" id="CHEBI:59789"/>
    </ligand>
</feature>
<feature type="binding site" evidence="1">
    <location>
        <begin position="114"/>
        <end position="115"/>
    </location>
    <ligand>
        <name>S-adenosyl-L-methionine</name>
        <dbReference type="ChEBI" id="CHEBI:59789"/>
    </ligand>
</feature>
<sequence length="241" mass="26568">MTAENRPPVGDKQDKGQAVQEMFASIAPRYDLLNRVLSLGVDRGWRRAAAAEALAHSPRRVLDVATGTGDFAIELKERAPQVEIVGSDFVPQMLDLARQKAGAKQLSIRFEEGDALRLPYPDASFDAVTCAFGFRNFADYTQGLAEMWRVLTPGGRLVLLEFPPPASGLFGAVFRLYFQHVLPRIGALVSGNAGAYTYLPESVLAFPEPERLAQMMRATGFRTRYRALTFGIAGMWVGDKR</sequence>
<keyword id="KW-0474">Menaquinone biosynthesis</keyword>
<keyword id="KW-0489">Methyltransferase</keyword>
<keyword id="KW-1185">Reference proteome</keyword>
<keyword id="KW-0949">S-adenosyl-L-methionine</keyword>
<keyword id="KW-0808">Transferase</keyword>
<organism>
    <name type="scientific">Deinococcus radiodurans (strain ATCC 13939 / DSM 20539 / JCM 16871 / CCUG 27074 / LMG 4051 / NBRC 15346 / NCIMB 9279 / VKM B-1422 / R1)</name>
    <dbReference type="NCBI Taxonomy" id="243230"/>
    <lineage>
        <taxon>Bacteria</taxon>
        <taxon>Thermotogati</taxon>
        <taxon>Deinococcota</taxon>
        <taxon>Deinococci</taxon>
        <taxon>Deinococcales</taxon>
        <taxon>Deinococcaceae</taxon>
        <taxon>Deinococcus</taxon>
    </lineage>
</organism>
<accession>Q9RRT0</accession>
<proteinExistence type="inferred from homology"/>